<feature type="transit peptide" description="Chloroplast" evidence="4">
    <location>
        <begin position="1"/>
        <end position="67"/>
    </location>
</feature>
<feature type="chain" id="PRO_0000394552" description="NADPH-dependent thioredoxin reductase 3">
    <location>
        <begin position="68"/>
        <end position="529"/>
    </location>
</feature>
<feature type="domain" description="Thioredoxin" evidence="5">
    <location>
        <begin position="403"/>
        <end position="529"/>
    </location>
</feature>
<feature type="region of interest" description="Disordered" evidence="6">
    <location>
        <begin position="54"/>
        <end position="78"/>
    </location>
</feature>
<feature type="compositionally biased region" description="Low complexity" evidence="6">
    <location>
        <begin position="64"/>
        <end position="78"/>
    </location>
</feature>
<feature type="active site" description="Nucleophile" evidence="2">
    <location>
        <position position="454"/>
    </location>
</feature>
<feature type="active site" description="Nucleophile" evidence="2">
    <location>
        <position position="457"/>
    </location>
</feature>
<feature type="binding site" evidence="3">
    <location>
        <begin position="91"/>
        <end position="94"/>
    </location>
    <ligand>
        <name>FAD</name>
        <dbReference type="ChEBI" id="CHEBI:57692"/>
    </ligand>
</feature>
<feature type="binding site" evidence="3">
    <location>
        <begin position="113"/>
        <end position="120"/>
    </location>
    <ligand>
        <name>FAD</name>
        <dbReference type="ChEBI" id="CHEBI:57692"/>
    </ligand>
</feature>
<feature type="binding site" evidence="3">
    <location>
        <position position="133"/>
    </location>
    <ligand>
        <name>FAD</name>
        <dbReference type="ChEBI" id="CHEBI:57692"/>
    </ligand>
</feature>
<feature type="binding site" evidence="3">
    <location>
        <position position="166"/>
    </location>
    <ligand>
        <name>FAD</name>
        <dbReference type="ChEBI" id="CHEBI:57692"/>
    </ligand>
</feature>
<feature type="binding site" evidence="1">
    <location>
        <position position="220"/>
    </location>
    <ligand>
        <name>FAD</name>
        <dbReference type="ChEBI" id="CHEBI:57692"/>
    </ligand>
</feature>
<feature type="binding site" evidence="3">
    <location>
        <position position="240"/>
    </location>
    <ligand>
        <name>NADP(+)</name>
        <dbReference type="ChEBI" id="CHEBI:58349"/>
    </ligand>
</feature>
<feature type="binding site" evidence="3">
    <location>
        <position position="265"/>
    </location>
    <ligand>
        <name>NADP(+)</name>
        <dbReference type="ChEBI" id="CHEBI:58349"/>
    </ligand>
</feature>
<feature type="binding site" evidence="3">
    <location>
        <position position="324"/>
    </location>
    <ligand>
        <name>NADP(+)</name>
        <dbReference type="ChEBI" id="CHEBI:58349"/>
    </ligand>
</feature>
<feature type="binding site" evidence="3">
    <location>
        <position position="344"/>
    </location>
    <ligand>
        <name>NADP(+)</name>
        <dbReference type="ChEBI" id="CHEBI:58349"/>
    </ligand>
</feature>
<feature type="binding site" evidence="3">
    <location>
        <position position="364"/>
    </location>
    <ligand>
        <name>FAD</name>
        <dbReference type="ChEBI" id="CHEBI:57692"/>
    </ligand>
</feature>
<feature type="binding site" evidence="3">
    <location>
        <begin position="371"/>
        <end position="374"/>
    </location>
    <ligand>
        <name>FAD</name>
        <dbReference type="ChEBI" id="CHEBI:57692"/>
    </ligand>
</feature>
<feature type="binding site" evidence="3">
    <location>
        <position position="371"/>
    </location>
    <ligand>
        <name>NADP(+)</name>
        <dbReference type="ChEBI" id="CHEBI:58349"/>
    </ligand>
</feature>
<feature type="site" description="Important for activity" evidence="1">
    <location>
        <position position="241"/>
    </location>
</feature>
<feature type="site" description="Important for activity" evidence="1">
    <location>
        <position position="259"/>
    </location>
</feature>
<feature type="site" description="Important for activity" evidence="1">
    <location>
        <position position="260"/>
    </location>
</feature>
<feature type="disulfide bond" description="Redox-active" evidence="5">
    <location>
        <begin position="217"/>
        <end position="220"/>
    </location>
</feature>
<feature type="disulfide bond" description="Redox-active" evidence="5">
    <location>
        <begin position="454"/>
        <end position="457"/>
    </location>
</feature>
<feature type="sequence conflict" description="In Ref. 3; AAN18085/AAL08250." evidence="13" ref="3">
    <original>E</original>
    <variation>K</variation>
    <location>
        <position position="399"/>
    </location>
</feature>
<evidence type="ECO:0000250" key="1"/>
<evidence type="ECO:0000250" key="2">
    <source>
        <dbReference type="UniProtKB" id="P09856"/>
    </source>
</evidence>
<evidence type="ECO:0000250" key="3">
    <source>
        <dbReference type="UniProtKB" id="P9WHH1"/>
    </source>
</evidence>
<evidence type="ECO:0000255" key="4"/>
<evidence type="ECO:0000255" key="5">
    <source>
        <dbReference type="PROSITE-ProRule" id="PRU00691"/>
    </source>
</evidence>
<evidence type="ECO:0000256" key="6">
    <source>
        <dbReference type="SAM" id="MobiDB-lite"/>
    </source>
</evidence>
<evidence type="ECO:0000269" key="7">
    <source>
    </source>
</evidence>
<evidence type="ECO:0000269" key="8">
    <source>
    </source>
</evidence>
<evidence type="ECO:0000269" key="9">
    <source>
    </source>
</evidence>
<evidence type="ECO:0000303" key="10">
    <source>
    </source>
</evidence>
<evidence type="ECO:0000303" key="11">
    <source>
    </source>
</evidence>
<evidence type="ECO:0000303" key="12">
    <source>
    </source>
</evidence>
<evidence type="ECO:0000305" key="13"/>
<evidence type="ECO:0000312" key="14">
    <source>
        <dbReference type="Araport" id="AT2G41680"/>
    </source>
</evidence>
<evidence type="ECO:0000312" key="15">
    <source>
        <dbReference type="EMBL" id="AAB84351.2"/>
    </source>
</evidence>
<dbReference type="EC" id="1.8.1.9" evidence="7"/>
<dbReference type="EMBL" id="AC002510">
    <property type="protein sequence ID" value="AAB84351.2"/>
    <property type="molecule type" value="Genomic_DNA"/>
</dbReference>
<dbReference type="EMBL" id="CP002685">
    <property type="protein sequence ID" value="AEC10015.1"/>
    <property type="molecule type" value="Genomic_DNA"/>
</dbReference>
<dbReference type="EMBL" id="AY056394">
    <property type="protein sequence ID" value="AAL08250.1"/>
    <property type="molecule type" value="mRNA"/>
</dbReference>
<dbReference type="EMBL" id="BT000516">
    <property type="protein sequence ID" value="AAN18085.1"/>
    <property type="molecule type" value="mRNA"/>
</dbReference>
<dbReference type="EMBL" id="AK229969">
    <property type="protein sequence ID" value="BAF01794.1"/>
    <property type="molecule type" value="mRNA"/>
</dbReference>
<dbReference type="PIR" id="T00824">
    <property type="entry name" value="T00824"/>
</dbReference>
<dbReference type="RefSeq" id="NP_565954.1">
    <property type="nucleotide sequence ID" value="NM_129731.6"/>
</dbReference>
<dbReference type="SMR" id="O22229"/>
<dbReference type="BioGRID" id="4103">
    <property type="interactions" value="15"/>
</dbReference>
<dbReference type="FunCoup" id="O22229">
    <property type="interactions" value="965"/>
</dbReference>
<dbReference type="IntAct" id="O22229">
    <property type="interactions" value="11"/>
</dbReference>
<dbReference type="MINT" id="O22229"/>
<dbReference type="STRING" id="3702.O22229"/>
<dbReference type="GlyGen" id="O22229">
    <property type="glycosylation" value="1 site"/>
</dbReference>
<dbReference type="MetOSite" id="O22229"/>
<dbReference type="PaxDb" id="3702-AT2G41680.1"/>
<dbReference type="ProteomicsDB" id="228701"/>
<dbReference type="EnsemblPlants" id="AT2G41680.1">
    <property type="protein sequence ID" value="AT2G41680.1"/>
    <property type="gene ID" value="AT2G41680"/>
</dbReference>
<dbReference type="GeneID" id="818766"/>
<dbReference type="Gramene" id="AT2G41680.1">
    <property type="protein sequence ID" value="AT2G41680.1"/>
    <property type="gene ID" value="AT2G41680"/>
</dbReference>
<dbReference type="KEGG" id="ath:AT2G41680"/>
<dbReference type="Araport" id="AT2G41680"/>
<dbReference type="TAIR" id="AT2G41680">
    <property type="gene designation" value="NTRC"/>
</dbReference>
<dbReference type="eggNOG" id="KOG0404">
    <property type="taxonomic scope" value="Eukaryota"/>
</dbReference>
<dbReference type="eggNOG" id="KOG0907">
    <property type="taxonomic scope" value="Eukaryota"/>
</dbReference>
<dbReference type="HOGENOM" id="CLU_031864_5_4_1"/>
<dbReference type="InParanoid" id="O22229"/>
<dbReference type="OMA" id="QPHTEEV"/>
<dbReference type="OrthoDB" id="371245at2759"/>
<dbReference type="PhylomeDB" id="O22229"/>
<dbReference type="BRENDA" id="1.8.1.9">
    <property type="organism ID" value="399"/>
</dbReference>
<dbReference type="PRO" id="PR:O22229"/>
<dbReference type="Proteomes" id="UP000006548">
    <property type="component" value="Chromosome 2"/>
</dbReference>
<dbReference type="ExpressionAtlas" id="O22229">
    <property type="expression patterns" value="baseline and differential"/>
</dbReference>
<dbReference type="GO" id="GO:0009507">
    <property type="term" value="C:chloroplast"/>
    <property type="evidence" value="ECO:0000314"/>
    <property type="project" value="UniProtKB"/>
</dbReference>
<dbReference type="GO" id="GO:0009570">
    <property type="term" value="C:chloroplast stroma"/>
    <property type="evidence" value="ECO:0007005"/>
    <property type="project" value="TAIR"/>
</dbReference>
<dbReference type="GO" id="GO:0005829">
    <property type="term" value="C:cytosol"/>
    <property type="evidence" value="ECO:0007005"/>
    <property type="project" value="TAIR"/>
</dbReference>
<dbReference type="GO" id="GO:0008047">
    <property type="term" value="F:enzyme activator activity"/>
    <property type="evidence" value="ECO:0000314"/>
    <property type="project" value="UniProtKB"/>
</dbReference>
<dbReference type="GO" id="GO:0042802">
    <property type="term" value="F:identical protein binding"/>
    <property type="evidence" value="ECO:0007669"/>
    <property type="project" value="EnsemblPlants"/>
</dbReference>
<dbReference type="GO" id="GO:0016671">
    <property type="term" value="F:oxidoreductase activity, acting on a sulfur group of donors, disulfide as acceptor"/>
    <property type="evidence" value="ECO:0000314"/>
    <property type="project" value="UniProtKB"/>
</dbReference>
<dbReference type="GO" id="GO:0004791">
    <property type="term" value="F:thioredoxin-disulfide reductase (NADPH) activity"/>
    <property type="evidence" value="ECO:0000314"/>
    <property type="project" value="UniProtKB"/>
</dbReference>
<dbReference type="GO" id="GO:0045454">
    <property type="term" value="P:cell redox homeostasis"/>
    <property type="evidence" value="ECO:0000314"/>
    <property type="project" value="UniProtKB"/>
</dbReference>
<dbReference type="GO" id="GO:0042744">
    <property type="term" value="P:hydrogen peroxide catabolic process"/>
    <property type="evidence" value="ECO:0000315"/>
    <property type="project" value="TAIR"/>
</dbReference>
<dbReference type="GO" id="GO:0043085">
    <property type="term" value="P:positive regulation of catalytic activity"/>
    <property type="evidence" value="ECO:0000314"/>
    <property type="project" value="UniProtKB"/>
</dbReference>
<dbReference type="GO" id="GO:0010380">
    <property type="term" value="P:regulation of chlorophyll biosynthetic process"/>
    <property type="evidence" value="ECO:0000315"/>
    <property type="project" value="UniProtKB"/>
</dbReference>
<dbReference type="GO" id="GO:0010581">
    <property type="term" value="P:regulation of starch biosynthetic process"/>
    <property type="evidence" value="ECO:0000315"/>
    <property type="project" value="UniProtKB"/>
</dbReference>
<dbReference type="GO" id="GO:0019430">
    <property type="term" value="P:removal of superoxide radicals"/>
    <property type="evidence" value="ECO:0007669"/>
    <property type="project" value="InterPro"/>
</dbReference>
<dbReference type="CDD" id="cd02949">
    <property type="entry name" value="TRX_NTR"/>
    <property type="match status" value="1"/>
</dbReference>
<dbReference type="FunFam" id="3.50.50.60:FF:000064">
    <property type="entry name" value="Thioredoxin reductase"/>
    <property type="match status" value="1"/>
</dbReference>
<dbReference type="Gene3D" id="3.50.50.60">
    <property type="entry name" value="FAD/NAD(P)-binding domain"/>
    <property type="match status" value="2"/>
</dbReference>
<dbReference type="Gene3D" id="3.40.30.10">
    <property type="entry name" value="Glutaredoxin"/>
    <property type="match status" value="1"/>
</dbReference>
<dbReference type="InterPro" id="IPR036188">
    <property type="entry name" value="FAD/NAD-bd_sf"/>
</dbReference>
<dbReference type="InterPro" id="IPR023753">
    <property type="entry name" value="FAD/NAD-binding_dom"/>
</dbReference>
<dbReference type="InterPro" id="IPR050097">
    <property type="entry name" value="Ferredoxin-NADP_redctase_2"/>
</dbReference>
<dbReference type="InterPro" id="IPR008255">
    <property type="entry name" value="Pyr_nucl-diS_OxRdtase_2_AS"/>
</dbReference>
<dbReference type="InterPro" id="IPR005982">
    <property type="entry name" value="Thioredox_Rdtase"/>
</dbReference>
<dbReference type="InterPro" id="IPR036249">
    <property type="entry name" value="Thioredoxin-like_sf"/>
</dbReference>
<dbReference type="InterPro" id="IPR017937">
    <property type="entry name" value="Thioredoxin_CS"/>
</dbReference>
<dbReference type="InterPro" id="IPR013766">
    <property type="entry name" value="Thioredoxin_domain"/>
</dbReference>
<dbReference type="NCBIfam" id="TIGR01292">
    <property type="entry name" value="TRX_reduct"/>
    <property type="match status" value="1"/>
</dbReference>
<dbReference type="PANTHER" id="PTHR48105">
    <property type="entry name" value="THIOREDOXIN REDUCTASE 1-RELATED-RELATED"/>
    <property type="match status" value="1"/>
</dbReference>
<dbReference type="Pfam" id="PF07992">
    <property type="entry name" value="Pyr_redox_2"/>
    <property type="match status" value="1"/>
</dbReference>
<dbReference type="Pfam" id="PF00085">
    <property type="entry name" value="Thioredoxin"/>
    <property type="match status" value="1"/>
</dbReference>
<dbReference type="PRINTS" id="PR00368">
    <property type="entry name" value="FADPNR"/>
</dbReference>
<dbReference type="PRINTS" id="PR00469">
    <property type="entry name" value="PNDRDTASEII"/>
</dbReference>
<dbReference type="SUPFAM" id="SSF51905">
    <property type="entry name" value="FAD/NAD(P)-binding domain"/>
    <property type="match status" value="1"/>
</dbReference>
<dbReference type="SUPFAM" id="SSF52833">
    <property type="entry name" value="Thioredoxin-like"/>
    <property type="match status" value="1"/>
</dbReference>
<dbReference type="PROSITE" id="PS00573">
    <property type="entry name" value="PYRIDINE_REDOX_2"/>
    <property type="match status" value="1"/>
</dbReference>
<dbReference type="PROSITE" id="PS00194">
    <property type="entry name" value="THIOREDOXIN_1"/>
    <property type="match status" value="1"/>
</dbReference>
<dbReference type="PROSITE" id="PS51352">
    <property type="entry name" value="THIOREDOXIN_2"/>
    <property type="match status" value="1"/>
</dbReference>
<accession>O22229</accession>
<accession>Q0WM62</accession>
<accession>Q93ZQ1</accession>
<name>TRXB3_ARATH</name>
<sequence>MAASPKIGIGIASVSSPHRVSAASSALSPPPHLFFLTTTTTTRHGGSYLLRQPTRTRSSDSLRLRVSATANSPSSSSSGGEIIENVVIIGSGPAGYTAAIYAARANLKPVVFEGYQMGGVPGGQLMTTTEVENFPGFPDGITGPDLMEKMRKQAERWGAELYPEDVESLSVTTAPFTVQTSERKVKCHSIIYATGATARRLRLPREEEFWSRGISACAICDGASPLFKGQVLAVVGGGDTATEEALYLTKYARHVHLLVRRDQLRASKAMQDRVINNPNITVHYNTETVDVLSNTKGQMSGILLRRLDTGEETELEAKGLFYGIGHSPNSQLLEGQVELDSSGYVLVREGTSNTSVEGVFAAGDVQDHEWRQAVTAAGSGCIAALSAERYLTSNNLLVEFHQPQTEEAKKEFTQRDVQEKFDITLTKHKGQYALRKLYHESPRVILVLYTSPTCGPCRTLKPILNKVVDEYNHDVHFVEIDIEEDQEIAEAAGIMGTPCVQFFKNKEMLRTISGVKMKKEYREFIEANK</sequence>
<gene>
    <name evidence="10 11 12" type="primary">NTRC</name>
    <name evidence="14" type="ordered locus">At2g41680</name>
    <name evidence="15" type="ORF">T32G6.20</name>
</gene>
<protein>
    <recommendedName>
        <fullName>NADPH-dependent thioredoxin reductase 3</fullName>
        <shortName>NTR3</shortName>
        <ecNumber evidence="7">1.8.1.9</ecNumber>
    </recommendedName>
    <alternativeName>
        <fullName evidence="10 11 12">NADPH-dependent thioredoxin reductase C</fullName>
        <shortName evidence="10">ANTR-C</shortName>
        <shortName evidence="11 12">AtNTRC</shortName>
    </alternativeName>
</protein>
<reference key="1">
    <citation type="journal article" date="1999" name="Nature">
        <title>Sequence and analysis of chromosome 2 of the plant Arabidopsis thaliana.</title>
        <authorList>
            <person name="Lin X."/>
            <person name="Kaul S."/>
            <person name="Rounsley S.D."/>
            <person name="Shea T.P."/>
            <person name="Benito M.-I."/>
            <person name="Town C.D."/>
            <person name="Fujii C.Y."/>
            <person name="Mason T.M."/>
            <person name="Bowman C.L."/>
            <person name="Barnstead M.E."/>
            <person name="Feldblyum T.V."/>
            <person name="Buell C.R."/>
            <person name="Ketchum K.A."/>
            <person name="Lee J.J."/>
            <person name="Ronning C.M."/>
            <person name="Koo H.L."/>
            <person name="Moffat K.S."/>
            <person name="Cronin L.A."/>
            <person name="Shen M."/>
            <person name="Pai G."/>
            <person name="Van Aken S."/>
            <person name="Umayam L."/>
            <person name="Tallon L.J."/>
            <person name="Gill J.E."/>
            <person name="Adams M.D."/>
            <person name="Carrera A.J."/>
            <person name="Creasy T.H."/>
            <person name="Goodman H.M."/>
            <person name="Somerville C.R."/>
            <person name="Copenhaver G.P."/>
            <person name="Preuss D."/>
            <person name="Nierman W.C."/>
            <person name="White O."/>
            <person name="Eisen J.A."/>
            <person name="Salzberg S.L."/>
            <person name="Fraser C.M."/>
            <person name="Venter J.C."/>
        </authorList>
    </citation>
    <scope>NUCLEOTIDE SEQUENCE [LARGE SCALE GENOMIC DNA]</scope>
    <source>
        <strain>cv. Columbia</strain>
    </source>
</reference>
<reference key="2">
    <citation type="journal article" date="2017" name="Plant J.">
        <title>Araport11: a complete reannotation of the Arabidopsis thaliana reference genome.</title>
        <authorList>
            <person name="Cheng C.Y."/>
            <person name="Krishnakumar V."/>
            <person name="Chan A.P."/>
            <person name="Thibaud-Nissen F."/>
            <person name="Schobel S."/>
            <person name="Town C.D."/>
        </authorList>
    </citation>
    <scope>GENOME REANNOTATION</scope>
    <source>
        <strain>cv. Columbia</strain>
    </source>
</reference>
<reference key="3">
    <citation type="journal article" date="2003" name="Science">
        <title>Empirical analysis of transcriptional activity in the Arabidopsis genome.</title>
        <authorList>
            <person name="Yamada K."/>
            <person name="Lim J."/>
            <person name="Dale J.M."/>
            <person name="Chen H."/>
            <person name="Shinn P."/>
            <person name="Palm C.J."/>
            <person name="Southwick A.M."/>
            <person name="Wu H.C."/>
            <person name="Kim C.J."/>
            <person name="Nguyen M."/>
            <person name="Pham P.K."/>
            <person name="Cheuk R.F."/>
            <person name="Karlin-Newmann G."/>
            <person name="Liu S.X."/>
            <person name="Lam B."/>
            <person name="Sakano H."/>
            <person name="Wu T."/>
            <person name="Yu G."/>
            <person name="Miranda M."/>
            <person name="Quach H.L."/>
            <person name="Tripp M."/>
            <person name="Chang C.H."/>
            <person name="Lee J.M."/>
            <person name="Toriumi M.J."/>
            <person name="Chan M.M."/>
            <person name="Tang C.C."/>
            <person name="Onodera C.S."/>
            <person name="Deng J.M."/>
            <person name="Akiyama K."/>
            <person name="Ansari Y."/>
            <person name="Arakawa T."/>
            <person name="Banh J."/>
            <person name="Banno F."/>
            <person name="Bowser L."/>
            <person name="Brooks S.Y."/>
            <person name="Carninci P."/>
            <person name="Chao Q."/>
            <person name="Choy N."/>
            <person name="Enju A."/>
            <person name="Goldsmith A.D."/>
            <person name="Gurjal M."/>
            <person name="Hansen N.F."/>
            <person name="Hayashizaki Y."/>
            <person name="Johnson-Hopson C."/>
            <person name="Hsuan V.W."/>
            <person name="Iida K."/>
            <person name="Karnes M."/>
            <person name="Khan S."/>
            <person name="Koesema E."/>
            <person name="Ishida J."/>
            <person name="Jiang P.X."/>
            <person name="Jones T."/>
            <person name="Kawai J."/>
            <person name="Kamiya A."/>
            <person name="Meyers C."/>
            <person name="Nakajima M."/>
            <person name="Narusaka M."/>
            <person name="Seki M."/>
            <person name="Sakurai T."/>
            <person name="Satou M."/>
            <person name="Tamse R."/>
            <person name="Vaysberg M."/>
            <person name="Wallender E.K."/>
            <person name="Wong C."/>
            <person name="Yamamura Y."/>
            <person name="Yuan S."/>
            <person name="Shinozaki K."/>
            <person name="Davis R.W."/>
            <person name="Theologis A."/>
            <person name="Ecker J.R."/>
        </authorList>
    </citation>
    <scope>NUCLEOTIDE SEQUENCE [LARGE SCALE MRNA]</scope>
    <source>
        <strain>cv. Columbia</strain>
    </source>
</reference>
<reference key="4">
    <citation type="submission" date="2006-07" db="EMBL/GenBank/DDBJ databases">
        <title>Large-scale analysis of RIKEN Arabidopsis full-length (RAFL) cDNAs.</title>
        <authorList>
            <person name="Totoki Y."/>
            <person name="Seki M."/>
            <person name="Ishida J."/>
            <person name="Nakajima M."/>
            <person name="Enju A."/>
            <person name="Kamiya A."/>
            <person name="Narusaka M."/>
            <person name="Shin-i T."/>
            <person name="Nakagawa M."/>
            <person name="Sakamoto N."/>
            <person name="Oishi K."/>
            <person name="Kohara Y."/>
            <person name="Kobayashi M."/>
            <person name="Toyoda A."/>
            <person name="Sakaki Y."/>
            <person name="Sakurai T."/>
            <person name="Iida K."/>
            <person name="Akiyama K."/>
            <person name="Satou M."/>
            <person name="Toyoda T."/>
            <person name="Konagaya A."/>
            <person name="Carninci P."/>
            <person name="Kawai J."/>
            <person name="Hayashizaki Y."/>
            <person name="Shinozaki K."/>
        </authorList>
    </citation>
    <scope>NUCLEOTIDE SEQUENCE [LARGE SCALE MRNA] OF 263-529</scope>
    <source>
        <strain>cv. Columbia</strain>
    </source>
</reference>
<reference key="5">
    <citation type="journal article" date="2006" name="Biochem. Biophys. Res. Commun.">
        <title>The C-type Arabidopsis thioredoxin reductase ANTR-C acts as an electron donor to 2-Cys peroxiredoxins in chloroplasts.</title>
        <authorList>
            <person name="Moon J.C."/>
            <person name="Jang H.H."/>
            <person name="Chae H.B."/>
            <person name="Lee J.R."/>
            <person name="Lee S.Y."/>
            <person name="Jung Y.J."/>
            <person name="Shin M.R."/>
            <person name="Lim H.S."/>
            <person name="Chung W.S."/>
            <person name="Yun D.-J."/>
            <person name="Lee K.O."/>
            <person name="Lee S.Y."/>
        </authorList>
    </citation>
    <scope>FUNCTION</scope>
    <scope>CATALYTIC ACTIVITY</scope>
    <scope>SUBCELLULAR LOCATION</scope>
    <scope>INTERACTION WITH BAS1</scope>
</reference>
<reference key="6">
    <citation type="journal article" date="2008" name="FEBS Lett.">
        <title>NADPH-dependent thioredoxin reductase and 2-Cys peroxiredoxins are needed for the protection of Mg-protoporphyrin monomethyl ester cyclase.</title>
        <authorList>
            <person name="Stenbaek A."/>
            <person name="Hansson A."/>
            <person name="Wulff R.P."/>
            <person name="Hansson M."/>
            <person name="Dietz K.J."/>
            <person name="Jensen P.E."/>
        </authorList>
    </citation>
    <scope>FUNCTION</scope>
    <scope>DISRUPTION PHENOTYPE</scope>
</reference>
<reference key="7">
    <citation type="journal article" date="2009" name="Proc. Natl. Acad. Sci. U.S.A.">
        <title>NTRC links built-in thioredoxin to light and sucrose in regulating starch synthesis in chloroplasts and amyloplasts.</title>
        <authorList>
            <person name="Michalska J."/>
            <person name="Zauber H."/>
            <person name="Buchanan B.B."/>
            <person name="Cejudo F.J."/>
            <person name="Geigenberger P."/>
        </authorList>
    </citation>
    <scope>FUNCTION</scope>
    <scope>DISRUPTION PHENOTYPE</scope>
</reference>
<keyword id="KW-0150">Chloroplast</keyword>
<keyword id="KW-1015">Disulfide bond</keyword>
<keyword id="KW-0249">Electron transport</keyword>
<keyword id="KW-0274">FAD</keyword>
<keyword id="KW-0285">Flavoprotein</keyword>
<keyword id="KW-0521">NADP</keyword>
<keyword id="KW-0560">Oxidoreductase</keyword>
<keyword id="KW-0934">Plastid</keyword>
<keyword id="KW-0676">Redox-active center</keyword>
<keyword id="KW-1185">Reference proteome</keyword>
<keyword id="KW-0809">Transit peptide</keyword>
<keyword id="KW-0813">Transport</keyword>
<proteinExistence type="evidence at protein level"/>
<comment type="function">
    <text evidence="7 8 9">Thioredoxin reductase (TR) that exhibits both TR and thioredoxin (Trx) activities. Contains a C-terminal functional Trx domain. Functions as an electron donor for plastidial 2-Cys peroxiredoxins and participates in a NADPH-dependent hydrogen peroxide scavenging system in chloroplasts in the dark. Required for chlorophyll biosynthesis and biogenesis of the photosynthetic apparatus. Activates aerobic cyclase which converts Mg-protoporhyrin monomethyl ester into protochlorophyllide. Involved in a light-dependent regulation of starch biosynthesis by redox activation of the ADP-glucose pyrophosphorylase (AGPase), a central enzyme of starch synthesis.</text>
</comment>
<comment type="catalytic activity">
    <reaction evidence="7">
        <text>[thioredoxin]-dithiol + NADP(+) = [thioredoxin]-disulfide + NADPH + H(+)</text>
        <dbReference type="Rhea" id="RHEA:20345"/>
        <dbReference type="Rhea" id="RHEA-COMP:10698"/>
        <dbReference type="Rhea" id="RHEA-COMP:10700"/>
        <dbReference type="ChEBI" id="CHEBI:15378"/>
        <dbReference type="ChEBI" id="CHEBI:29950"/>
        <dbReference type="ChEBI" id="CHEBI:50058"/>
        <dbReference type="ChEBI" id="CHEBI:57783"/>
        <dbReference type="ChEBI" id="CHEBI:58349"/>
        <dbReference type="EC" id="1.8.1.9"/>
    </reaction>
</comment>
<comment type="cofactor">
    <cofactor evidence="3">
        <name>FAD</name>
        <dbReference type="ChEBI" id="CHEBI:57692"/>
    </cofactor>
    <text evidence="3">Binds 1 FAD per subunit.</text>
</comment>
<comment type="subunit">
    <text evidence="7">May homodimerize. Interacts with the 2-Cys peroxiredoxin BAS1.</text>
</comment>
<comment type="interaction">
    <interactant intactId="EBI-4427818">
        <id>O22229</id>
    </interactant>
    <interactant intactId="EBI-15193683">
        <id>Q5CCK4</id>
        <label>VAL2</label>
    </interactant>
    <organismsDiffer>false</organismsDiffer>
    <experiments>3</experiments>
</comment>
<comment type="subcellular location">
    <subcellularLocation>
        <location evidence="7">Plastid</location>
        <location evidence="7">Chloroplast</location>
    </subcellularLocation>
</comment>
<comment type="disruption phenotype">
    <text evidence="8 9">Dwarf plants with chlorotic leaves. Accumulation of Mg-protoporhyrin after feeding with 5-aminolevulinic acid.</text>
</comment>
<comment type="similarity">
    <text evidence="13">Belongs to the class-II pyridine nucleotide-disulfide oxidoreductase family.</text>
</comment>
<organism>
    <name type="scientific">Arabidopsis thaliana</name>
    <name type="common">Mouse-ear cress</name>
    <dbReference type="NCBI Taxonomy" id="3702"/>
    <lineage>
        <taxon>Eukaryota</taxon>
        <taxon>Viridiplantae</taxon>
        <taxon>Streptophyta</taxon>
        <taxon>Embryophyta</taxon>
        <taxon>Tracheophyta</taxon>
        <taxon>Spermatophyta</taxon>
        <taxon>Magnoliopsida</taxon>
        <taxon>eudicotyledons</taxon>
        <taxon>Gunneridae</taxon>
        <taxon>Pentapetalae</taxon>
        <taxon>rosids</taxon>
        <taxon>malvids</taxon>
        <taxon>Brassicales</taxon>
        <taxon>Brassicaceae</taxon>
        <taxon>Camelineae</taxon>
        <taxon>Arabidopsis</taxon>
    </lineage>
</organism>